<dbReference type="EC" id="3.6.1.-" evidence="1"/>
<dbReference type="EMBL" id="CP001339">
    <property type="protein sequence ID" value="ACL73493.1"/>
    <property type="molecule type" value="Genomic_DNA"/>
</dbReference>
<dbReference type="RefSeq" id="WP_012638968.1">
    <property type="nucleotide sequence ID" value="NC_011901.1"/>
</dbReference>
<dbReference type="SMR" id="B8GLD8"/>
<dbReference type="STRING" id="396588.Tgr7_2415"/>
<dbReference type="KEGG" id="tgr:Tgr7_2415"/>
<dbReference type="eggNOG" id="COG0494">
    <property type="taxonomic scope" value="Bacteria"/>
</dbReference>
<dbReference type="HOGENOM" id="CLU_087195_3_1_6"/>
<dbReference type="OrthoDB" id="9816040at2"/>
<dbReference type="Proteomes" id="UP000002383">
    <property type="component" value="Chromosome"/>
</dbReference>
<dbReference type="GO" id="GO:0016462">
    <property type="term" value="F:pyrophosphatase activity"/>
    <property type="evidence" value="ECO:0007669"/>
    <property type="project" value="UniProtKB-ARBA"/>
</dbReference>
<dbReference type="CDD" id="cd03671">
    <property type="entry name" value="NUDIX_Ap4A_hydrolase_plant_like"/>
    <property type="match status" value="1"/>
</dbReference>
<dbReference type="FunFam" id="3.90.79.10:FF:000001">
    <property type="entry name" value="RNA pyrophosphohydrolase"/>
    <property type="match status" value="1"/>
</dbReference>
<dbReference type="Gene3D" id="3.90.79.10">
    <property type="entry name" value="Nucleoside Triphosphate Pyrophosphohydrolase"/>
    <property type="match status" value="1"/>
</dbReference>
<dbReference type="HAMAP" id="MF_00298">
    <property type="entry name" value="Nudix_RppH"/>
    <property type="match status" value="1"/>
</dbReference>
<dbReference type="InterPro" id="IPR015797">
    <property type="entry name" value="NUDIX_hydrolase-like_dom_sf"/>
</dbReference>
<dbReference type="InterPro" id="IPR020084">
    <property type="entry name" value="NUDIX_hydrolase_CS"/>
</dbReference>
<dbReference type="InterPro" id="IPR000086">
    <property type="entry name" value="NUDIX_hydrolase_dom"/>
</dbReference>
<dbReference type="InterPro" id="IPR022927">
    <property type="entry name" value="RppH"/>
</dbReference>
<dbReference type="NCBIfam" id="NF001937">
    <property type="entry name" value="PRK00714.1-4"/>
    <property type="match status" value="1"/>
</dbReference>
<dbReference type="NCBIfam" id="NF001938">
    <property type="entry name" value="PRK00714.1-5"/>
    <property type="match status" value="1"/>
</dbReference>
<dbReference type="PANTHER" id="PTHR43046">
    <property type="entry name" value="GDP-MANNOSE MANNOSYL HYDROLASE"/>
    <property type="match status" value="1"/>
</dbReference>
<dbReference type="PANTHER" id="PTHR43046:SF14">
    <property type="entry name" value="MUTT_NUDIX FAMILY PROTEIN"/>
    <property type="match status" value="1"/>
</dbReference>
<dbReference type="Pfam" id="PF00293">
    <property type="entry name" value="NUDIX"/>
    <property type="match status" value="1"/>
</dbReference>
<dbReference type="SUPFAM" id="SSF55811">
    <property type="entry name" value="Nudix"/>
    <property type="match status" value="1"/>
</dbReference>
<dbReference type="PROSITE" id="PS51462">
    <property type="entry name" value="NUDIX"/>
    <property type="match status" value="1"/>
</dbReference>
<dbReference type="PROSITE" id="PS00893">
    <property type="entry name" value="NUDIX_BOX"/>
    <property type="match status" value="1"/>
</dbReference>
<protein>
    <recommendedName>
        <fullName evidence="1">RNA pyrophosphohydrolase</fullName>
        <ecNumber evidence="1">3.6.1.-</ecNumber>
    </recommendedName>
    <alternativeName>
        <fullName evidence="1">(Di)nucleoside polyphosphate hydrolase</fullName>
    </alternativeName>
</protein>
<proteinExistence type="inferred from homology"/>
<accession>B8GLD8</accession>
<comment type="function">
    <text evidence="1">Accelerates the degradation of transcripts by removing pyrophosphate from the 5'-end of triphosphorylated RNA, leading to a more labile monophosphorylated state that can stimulate subsequent ribonuclease cleavage.</text>
</comment>
<comment type="cofactor">
    <cofactor evidence="1">
        <name>a divalent metal cation</name>
        <dbReference type="ChEBI" id="CHEBI:60240"/>
    </cofactor>
</comment>
<comment type="similarity">
    <text evidence="1">Belongs to the Nudix hydrolase family. RppH subfamily.</text>
</comment>
<name>RPPH_THISH</name>
<feature type="chain" id="PRO_1000191851" description="RNA pyrophosphohydrolase">
    <location>
        <begin position="1"/>
        <end position="173"/>
    </location>
</feature>
<feature type="domain" description="Nudix hydrolase" evidence="1">
    <location>
        <begin position="6"/>
        <end position="149"/>
    </location>
</feature>
<feature type="short sequence motif" description="Nudix box">
    <location>
        <begin position="38"/>
        <end position="59"/>
    </location>
</feature>
<gene>
    <name evidence="1" type="primary">rppH</name>
    <name evidence="1" type="synonym">nudH</name>
    <name type="ordered locus">Tgr7_2415</name>
</gene>
<evidence type="ECO:0000255" key="1">
    <source>
        <dbReference type="HAMAP-Rule" id="MF_00298"/>
    </source>
</evidence>
<organism>
    <name type="scientific">Thioalkalivibrio sulfidiphilus (strain HL-EbGR7)</name>
    <dbReference type="NCBI Taxonomy" id="396588"/>
    <lineage>
        <taxon>Bacteria</taxon>
        <taxon>Pseudomonadati</taxon>
        <taxon>Pseudomonadota</taxon>
        <taxon>Gammaproteobacteria</taxon>
        <taxon>Chromatiales</taxon>
        <taxon>Ectothiorhodospiraceae</taxon>
        <taxon>Thioalkalivibrio</taxon>
    </lineage>
</organism>
<keyword id="KW-0378">Hydrolase</keyword>
<keyword id="KW-1185">Reference proteome</keyword>
<reference key="1">
    <citation type="journal article" date="2011" name="Stand. Genomic Sci.">
        <title>Complete genome sequence of 'Thioalkalivibrio sulfidophilus' HL-EbGr7.</title>
        <authorList>
            <person name="Muyzer G."/>
            <person name="Sorokin D.Y."/>
            <person name="Mavromatis K."/>
            <person name="Lapidus A."/>
            <person name="Clum A."/>
            <person name="Ivanova N."/>
            <person name="Pati A."/>
            <person name="d'Haeseleer P."/>
            <person name="Woyke T."/>
            <person name="Kyrpides N.C."/>
        </authorList>
    </citation>
    <scope>NUCLEOTIDE SEQUENCE [LARGE SCALE GENOMIC DNA]</scope>
    <source>
        <strain>HL-EbGR7</strain>
    </source>
</reference>
<sequence length="173" mass="20617">MIDCDGYRPNVGIILSNQERRLFWAKRIGQQAWQFPQGGIRRDESPLDAMYRELAEETGLGPEHVEVIGKTRDWLRYRLPKHLIRRHSNPVCIGQKQIWFMLRLVGDETCVRLDSVQPAEFDSWRWVDYWRPMREVVFFKRHVYRRALRELAPLLFPEGMPGQQRQPRTRSGA</sequence>